<keyword id="KW-0027">Amidation</keyword>
<keyword id="KW-0044">Antibiotic</keyword>
<keyword id="KW-0929">Antimicrobial</keyword>
<keyword id="KW-0165">Cleavage on pair of basic residues</keyword>
<keyword id="KW-0472">Membrane</keyword>
<keyword id="KW-0964">Secreted</keyword>
<keyword id="KW-0732">Signal</keyword>
<keyword id="KW-1052">Target cell membrane</keyword>
<keyword id="KW-1053">Target membrane</keyword>
<keyword id="KW-0812">Transmembrane</keyword>
<organism>
    <name type="scientific">Pandinus cavimanus</name>
    <name type="common">Tanzanian red clawed scorpion</name>
    <dbReference type="NCBI Taxonomy" id="217261"/>
    <lineage>
        <taxon>Eukaryota</taxon>
        <taxon>Metazoa</taxon>
        <taxon>Ecdysozoa</taxon>
        <taxon>Arthropoda</taxon>
        <taxon>Chelicerata</taxon>
        <taxon>Arachnida</taxon>
        <taxon>Scorpiones</taxon>
        <taxon>Iurida</taxon>
        <taxon>Scorpionoidea</taxon>
        <taxon>Scorpionidae</taxon>
        <taxon>Pandininae</taxon>
        <taxon>Pandinus</taxon>
    </lineage>
</organism>
<comment type="function">
    <text evidence="1">Amphipathic peptide that has antibacterial activities.</text>
</comment>
<comment type="subcellular location">
    <subcellularLocation>
        <location evidence="1">Secreted</location>
    </subcellularLocation>
    <subcellularLocation>
        <location evidence="1">Target cell membrane</location>
    </subcellularLocation>
    <text evidence="1">Forms an alpha-helical membrane channel in the prey.</text>
</comment>
<comment type="tissue specificity">
    <text>Expressed by the venom gland.</text>
</comment>
<comment type="similarity">
    <text evidence="2">Belongs to the non-disulfide-bridged peptide (NDBP) superfamily. Short antimicrobial peptide (group 4) family.</text>
</comment>
<accession>H2CYR5</accession>
<proteinExistence type="evidence at transcript level"/>
<name>NDB4_PANCV</name>
<reference key="1">
    <citation type="journal article" date="2012" name="Proteomics">
        <title>Molecular diversity of the telson and venom components from Pandinus cavimanus (Scorpionidae Latreille 1802): transcriptome, venomics and function.</title>
        <authorList>
            <person name="Diego-Garcia E."/>
            <person name="Peigneur S."/>
            <person name="Clynen E."/>
            <person name="Marien T."/>
            <person name="Czech L."/>
            <person name="Schoofs L."/>
            <person name="Tytgat J."/>
        </authorList>
    </citation>
    <scope>NUCLEOTIDE SEQUENCE [MRNA]</scope>
    <source>
        <tissue>Venom gland</tissue>
    </source>
</reference>
<sequence>MKTQFAILLIALVLFQMFSQSEAFLGGLWKAMSNLLGKRGLNELDDLDELFDGEISQADIDFLKELMS</sequence>
<dbReference type="EMBL" id="JN315745">
    <property type="protein sequence ID" value="AEX09223.1"/>
    <property type="molecule type" value="mRNA"/>
</dbReference>
<dbReference type="SMR" id="H2CYR5"/>
<dbReference type="GO" id="GO:0005576">
    <property type="term" value="C:extracellular region"/>
    <property type="evidence" value="ECO:0007669"/>
    <property type="project" value="UniProtKB-SubCell"/>
</dbReference>
<dbReference type="GO" id="GO:0016020">
    <property type="term" value="C:membrane"/>
    <property type="evidence" value="ECO:0007669"/>
    <property type="project" value="UniProtKB-KW"/>
</dbReference>
<dbReference type="GO" id="GO:0044218">
    <property type="term" value="C:other organism cell membrane"/>
    <property type="evidence" value="ECO:0007669"/>
    <property type="project" value="UniProtKB-KW"/>
</dbReference>
<dbReference type="GO" id="GO:0042742">
    <property type="term" value="P:defense response to bacterium"/>
    <property type="evidence" value="ECO:0007669"/>
    <property type="project" value="UniProtKB-KW"/>
</dbReference>
<protein>
    <recommendedName>
        <fullName>Cytotoxic linear peptide</fullName>
    </recommendedName>
</protein>
<evidence type="ECO:0000250" key="1"/>
<evidence type="ECO:0000305" key="2"/>
<feature type="signal peptide" evidence="1">
    <location>
        <begin position="1"/>
        <end position="23"/>
    </location>
</feature>
<feature type="peptide" id="PRO_0000418797" description="Cytotoxic linear peptide">
    <location>
        <begin position="24"/>
        <end position="36"/>
    </location>
</feature>
<feature type="propeptide" id="PRO_0000418798" evidence="1">
    <location>
        <begin position="40"/>
        <end position="68"/>
    </location>
</feature>
<feature type="site" description="Important for activity" evidence="1">
    <location>
        <position position="29"/>
    </location>
</feature>
<feature type="modified residue" description="Leucine amide" evidence="1">
    <location>
        <position position="36"/>
    </location>
</feature>